<proteinExistence type="inferred from homology"/>
<protein>
    <recommendedName>
        <fullName evidence="1">UPF0225 protein Shewana3_2159</fullName>
    </recommendedName>
</protein>
<organism>
    <name type="scientific">Shewanella sp. (strain ANA-3)</name>
    <dbReference type="NCBI Taxonomy" id="94122"/>
    <lineage>
        <taxon>Bacteria</taxon>
        <taxon>Pseudomonadati</taxon>
        <taxon>Pseudomonadota</taxon>
        <taxon>Gammaproteobacteria</taxon>
        <taxon>Alteromonadales</taxon>
        <taxon>Shewanellaceae</taxon>
        <taxon>Shewanella</taxon>
    </lineage>
</organism>
<feature type="chain" id="PRO_1000056738" description="UPF0225 protein Shewana3_2159">
    <location>
        <begin position="1"/>
        <end position="164"/>
    </location>
</feature>
<accession>A0KX70</accession>
<gene>
    <name type="ordered locus">Shewana3_2159</name>
</gene>
<comment type="similarity">
    <text evidence="1">Belongs to the UPF0225 family.</text>
</comment>
<dbReference type="EMBL" id="CP000469">
    <property type="protein sequence ID" value="ABK48389.1"/>
    <property type="molecule type" value="Genomic_DNA"/>
</dbReference>
<dbReference type="SMR" id="A0KX70"/>
<dbReference type="STRING" id="94122.Shewana3_2159"/>
<dbReference type="KEGG" id="shn:Shewana3_2159"/>
<dbReference type="eggNOG" id="COG3012">
    <property type="taxonomic scope" value="Bacteria"/>
</dbReference>
<dbReference type="HOGENOM" id="CLU_099590_0_0_6"/>
<dbReference type="OrthoDB" id="21421at2"/>
<dbReference type="Proteomes" id="UP000002589">
    <property type="component" value="Chromosome"/>
</dbReference>
<dbReference type="Gene3D" id="3.10.450.50">
    <property type="match status" value="1"/>
</dbReference>
<dbReference type="HAMAP" id="MF_00612">
    <property type="entry name" value="UPF0225"/>
    <property type="match status" value="1"/>
</dbReference>
<dbReference type="InterPro" id="IPR032710">
    <property type="entry name" value="NTF2-like_dom_sf"/>
</dbReference>
<dbReference type="InterPro" id="IPR004027">
    <property type="entry name" value="SEC_C_motif"/>
</dbReference>
<dbReference type="InterPro" id="IPR023006">
    <property type="entry name" value="UPF0225"/>
</dbReference>
<dbReference type="InterPro" id="IPR048469">
    <property type="entry name" value="YchJ-like_M"/>
</dbReference>
<dbReference type="NCBIfam" id="NF002486">
    <property type="entry name" value="PRK01752.1"/>
    <property type="match status" value="1"/>
</dbReference>
<dbReference type="PANTHER" id="PTHR33747:SF1">
    <property type="entry name" value="ADENYLATE CYCLASE-ASSOCIATED CAP C-TERMINAL DOMAIN-CONTAINING PROTEIN"/>
    <property type="match status" value="1"/>
</dbReference>
<dbReference type="PANTHER" id="PTHR33747">
    <property type="entry name" value="UPF0225 PROTEIN SCO1677"/>
    <property type="match status" value="1"/>
</dbReference>
<dbReference type="Pfam" id="PF02810">
    <property type="entry name" value="SEC-C"/>
    <property type="match status" value="1"/>
</dbReference>
<dbReference type="Pfam" id="PF17775">
    <property type="entry name" value="YchJ_M-like"/>
    <property type="match status" value="1"/>
</dbReference>
<dbReference type="SUPFAM" id="SSF54427">
    <property type="entry name" value="NTF2-like"/>
    <property type="match status" value="1"/>
</dbReference>
<dbReference type="SUPFAM" id="SSF103642">
    <property type="entry name" value="Sec-C motif"/>
    <property type="match status" value="1"/>
</dbReference>
<reference key="1">
    <citation type="submission" date="2006-09" db="EMBL/GenBank/DDBJ databases">
        <title>Complete sequence of chromosome 1 of Shewanella sp. ANA-3.</title>
        <authorList>
            <person name="Copeland A."/>
            <person name="Lucas S."/>
            <person name="Lapidus A."/>
            <person name="Barry K."/>
            <person name="Detter J.C."/>
            <person name="Glavina del Rio T."/>
            <person name="Hammon N."/>
            <person name="Israni S."/>
            <person name="Dalin E."/>
            <person name="Tice H."/>
            <person name="Pitluck S."/>
            <person name="Chertkov O."/>
            <person name="Brettin T."/>
            <person name="Bruce D."/>
            <person name="Han C."/>
            <person name="Tapia R."/>
            <person name="Gilna P."/>
            <person name="Schmutz J."/>
            <person name="Larimer F."/>
            <person name="Land M."/>
            <person name="Hauser L."/>
            <person name="Kyrpides N."/>
            <person name="Kim E."/>
            <person name="Newman D."/>
            <person name="Salticov C."/>
            <person name="Konstantinidis K."/>
            <person name="Klappenback J."/>
            <person name="Tiedje J."/>
            <person name="Richardson P."/>
        </authorList>
    </citation>
    <scope>NUCLEOTIDE SEQUENCE [LARGE SCALE GENOMIC DNA]</scope>
    <source>
        <strain>ANA-3</strain>
    </source>
</reference>
<name>Y2159_SHESA</name>
<sequence>MTHDKTCPCGSPKIYQDCCQILHLGLDSGAQLATSPEQLMRSRYCAFVLKNFDYIIKTHHAAYLDGLTLEQLQQGPHPEWLGLDVLSANDTTQPDGSKFGTVTFKAWYKMSGEIDAIYERSEFIFEQGRWFYTKGHQMHAKLPGRNDPCVCHSGKKFKQCCMKG</sequence>
<evidence type="ECO:0000255" key="1">
    <source>
        <dbReference type="HAMAP-Rule" id="MF_00612"/>
    </source>
</evidence>